<accession>Q1MIU5</accession>
<dbReference type="EC" id="2.1.2.1" evidence="1"/>
<dbReference type="EMBL" id="AM236080">
    <property type="protein sequence ID" value="CAK07115.1"/>
    <property type="molecule type" value="Genomic_DNA"/>
</dbReference>
<dbReference type="RefSeq" id="WP_011651299.1">
    <property type="nucleotide sequence ID" value="NC_008380.1"/>
</dbReference>
<dbReference type="SMR" id="Q1MIU5"/>
<dbReference type="EnsemblBacteria" id="CAK07115">
    <property type="protein sequence ID" value="CAK07115"/>
    <property type="gene ID" value="RL1620"/>
</dbReference>
<dbReference type="KEGG" id="rle:RL1620"/>
<dbReference type="eggNOG" id="COG0112">
    <property type="taxonomic scope" value="Bacteria"/>
</dbReference>
<dbReference type="HOGENOM" id="CLU_022477_2_1_5"/>
<dbReference type="UniPathway" id="UPA00193"/>
<dbReference type="UniPathway" id="UPA00288">
    <property type="reaction ID" value="UER01023"/>
</dbReference>
<dbReference type="Proteomes" id="UP000006575">
    <property type="component" value="Chromosome"/>
</dbReference>
<dbReference type="GO" id="GO:0005829">
    <property type="term" value="C:cytosol"/>
    <property type="evidence" value="ECO:0007669"/>
    <property type="project" value="TreeGrafter"/>
</dbReference>
<dbReference type="GO" id="GO:0004372">
    <property type="term" value="F:glycine hydroxymethyltransferase activity"/>
    <property type="evidence" value="ECO:0007669"/>
    <property type="project" value="UniProtKB-UniRule"/>
</dbReference>
<dbReference type="GO" id="GO:0030170">
    <property type="term" value="F:pyridoxal phosphate binding"/>
    <property type="evidence" value="ECO:0007669"/>
    <property type="project" value="UniProtKB-UniRule"/>
</dbReference>
<dbReference type="GO" id="GO:0019264">
    <property type="term" value="P:glycine biosynthetic process from serine"/>
    <property type="evidence" value="ECO:0007669"/>
    <property type="project" value="UniProtKB-UniRule"/>
</dbReference>
<dbReference type="GO" id="GO:0035999">
    <property type="term" value="P:tetrahydrofolate interconversion"/>
    <property type="evidence" value="ECO:0007669"/>
    <property type="project" value="UniProtKB-UniRule"/>
</dbReference>
<dbReference type="CDD" id="cd00378">
    <property type="entry name" value="SHMT"/>
    <property type="match status" value="1"/>
</dbReference>
<dbReference type="FunFam" id="3.40.640.10:FF:000001">
    <property type="entry name" value="Serine hydroxymethyltransferase"/>
    <property type="match status" value="1"/>
</dbReference>
<dbReference type="FunFam" id="3.90.1150.10:FF:000003">
    <property type="entry name" value="Serine hydroxymethyltransferase"/>
    <property type="match status" value="1"/>
</dbReference>
<dbReference type="Gene3D" id="3.90.1150.10">
    <property type="entry name" value="Aspartate Aminotransferase, domain 1"/>
    <property type="match status" value="1"/>
</dbReference>
<dbReference type="Gene3D" id="3.40.640.10">
    <property type="entry name" value="Type I PLP-dependent aspartate aminotransferase-like (Major domain)"/>
    <property type="match status" value="1"/>
</dbReference>
<dbReference type="HAMAP" id="MF_00051">
    <property type="entry name" value="SHMT"/>
    <property type="match status" value="1"/>
</dbReference>
<dbReference type="InterPro" id="IPR015424">
    <property type="entry name" value="PyrdxlP-dep_Trfase"/>
</dbReference>
<dbReference type="InterPro" id="IPR015421">
    <property type="entry name" value="PyrdxlP-dep_Trfase_major"/>
</dbReference>
<dbReference type="InterPro" id="IPR015422">
    <property type="entry name" value="PyrdxlP-dep_Trfase_small"/>
</dbReference>
<dbReference type="InterPro" id="IPR001085">
    <property type="entry name" value="Ser_HO-MeTrfase"/>
</dbReference>
<dbReference type="InterPro" id="IPR049943">
    <property type="entry name" value="Ser_HO-MeTrfase-like"/>
</dbReference>
<dbReference type="InterPro" id="IPR019798">
    <property type="entry name" value="Ser_HO-MeTrfase_PLP_BS"/>
</dbReference>
<dbReference type="InterPro" id="IPR039429">
    <property type="entry name" value="SHMT-like_dom"/>
</dbReference>
<dbReference type="NCBIfam" id="NF000586">
    <property type="entry name" value="PRK00011.1"/>
    <property type="match status" value="1"/>
</dbReference>
<dbReference type="PANTHER" id="PTHR11680">
    <property type="entry name" value="SERINE HYDROXYMETHYLTRANSFERASE"/>
    <property type="match status" value="1"/>
</dbReference>
<dbReference type="PANTHER" id="PTHR11680:SF35">
    <property type="entry name" value="SERINE HYDROXYMETHYLTRANSFERASE 1"/>
    <property type="match status" value="1"/>
</dbReference>
<dbReference type="Pfam" id="PF00464">
    <property type="entry name" value="SHMT"/>
    <property type="match status" value="1"/>
</dbReference>
<dbReference type="PIRSF" id="PIRSF000412">
    <property type="entry name" value="SHMT"/>
    <property type="match status" value="1"/>
</dbReference>
<dbReference type="SUPFAM" id="SSF53383">
    <property type="entry name" value="PLP-dependent transferases"/>
    <property type="match status" value="1"/>
</dbReference>
<dbReference type="PROSITE" id="PS00096">
    <property type="entry name" value="SHMT"/>
    <property type="match status" value="1"/>
</dbReference>
<gene>
    <name evidence="1" type="primary">glyA</name>
    <name type="ordered locus">RL1620</name>
</gene>
<sequence>MTNASTESFFNRSLADVDPDIFGAIGKELGRQRHEIELIASENIVSRAVLEAQGSIMTNKYAEGYPGKRYYGGCQFVDIAEELAIERAKKLFGVNFANVQPNSGSQMNQAVFLALLQPGDTFMGLDLNSGGHLTHGSPVNMSGKWFNVVSYGVREGDNLLDMDEVARKAEETKPKLIIAGGTAYSRIWDWKRFREIADSVGAYLMVDMAHIAGLVAGGVHPSPFPHCHVATTTTHKSLRGPRGGVILTNDEDLAKKFNSAVFPGLQGGPLMHIIAAKAVAFGEALQPEFKDYAAQVVKNAKALAETLISGGLDVVSGGTDNHLMLVDLRKKNATGKRAEAALGRAYVTCNKNGIPFDPEKPFVTSGVRLGAPAGTTRGFKEAEFREIGNLIVEVLDGLKVANSDEGNAAVEAAVRGKVVSLTDRFPMYGYMG</sequence>
<proteinExistence type="inferred from homology"/>
<reference key="1">
    <citation type="journal article" date="2006" name="Genome Biol.">
        <title>The genome of Rhizobium leguminosarum has recognizable core and accessory components.</title>
        <authorList>
            <person name="Young J.P.W."/>
            <person name="Crossman L.C."/>
            <person name="Johnston A.W.B."/>
            <person name="Thomson N.R."/>
            <person name="Ghazoui Z.F."/>
            <person name="Hull K.H."/>
            <person name="Wexler M."/>
            <person name="Curson A.R.J."/>
            <person name="Todd J.D."/>
            <person name="Poole P.S."/>
            <person name="Mauchline T.H."/>
            <person name="East A.K."/>
            <person name="Quail M.A."/>
            <person name="Churcher C."/>
            <person name="Arrowsmith C."/>
            <person name="Cherevach I."/>
            <person name="Chillingworth T."/>
            <person name="Clarke K."/>
            <person name="Cronin A."/>
            <person name="Davis P."/>
            <person name="Fraser A."/>
            <person name="Hance Z."/>
            <person name="Hauser H."/>
            <person name="Jagels K."/>
            <person name="Moule S."/>
            <person name="Mungall K."/>
            <person name="Norbertczak H."/>
            <person name="Rabbinowitsch E."/>
            <person name="Sanders M."/>
            <person name="Simmonds M."/>
            <person name="Whitehead S."/>
            <person name="Parkhill J."/>
        </authorList>
    </citation>
    <scope>NUCLEOTIDE SEQUENCE [LARGE SCALE GENOMIC DNA]</scope>
    <source>
        <strain>DSM 114642 / LMG 32736 / 3841</strain>
    </source>
</reference>
<comment type="function">
    <text evidence="1">Catalyzes the reversible interconversion of serine and glycine with tetrahydrofolate (THF) serving as the one-carbon carrier. This reaction serves as the major source of one-carbon groups required for the biosynthesis of purines, thymidylate, methionine, and other important biomolecules. Also exhibits THF-independent aldolase activity toward beta-hydroxyamino acids, producing glycine and aldehydes, via a retro-aldol mechanism.</text>
</comment>
<comment type="catalytic activity">
    <reaction evidence="1">
        <text>(6R)-5,10-methylene-5,6,7,8-tetrahydrofolate + glycine + H2O = (6S)-5,6,7,8-tetrahydrofolate + L-serine</text>
        <dbReference type="Rhea" id="RHEA:15481"/>
        <dbReference type="ChEBI" id="CHEBI:15377"/>
        <dbReference type="ChEBI" id="CHEBI:15636"/>
        <dbReference type="ChEBI" id="CHEBI:33384"/>
        <dbReference type="ChEBI" id="CHEBI:57305"/>
        <dbReference type="ChEBI" id="CHEBI:57453"/>
        <dbReference type="EC" id="2.1.2.1"/>
    </reaction>
</comment>
<comment type="cofactor">
    <cofactor evidence="1">
        <name>pyridoxal 5'-phosphate</name>
        <dbReference type="ChEBI" id="CHEBI:597326"/>
    </cofactor>
</comment>
<comment type="pathway">
    <text evidence="1">One-carbon metabolism; tetrahydrofolate interconversion.</text>
</comment>
<comment type="pathway">
    <text evidence="1">Amino-acid biosynthesis; glycine biosynthesis; glycine from L-serine: step 1/1.</text>
</comment>
<comment type="subunit">
    <text evidence="1">Homodimer.</text>
</comment>
<comment type="subcellular location">
    <subcellularLocation>
        <location evidence="1">Cytoplasm</location>
    </subcellularLocation>
</comment>
<comment type="similarity">
    <text evidence="1">Belongs to the SHMT family.</text>
</comment>
<organism>
    <name type="scientific">Rhizobium johnstonii (strain DSM 114642 / LMG 32736 / 3841)</name>
    <name type="common">Rhizobium leguminosarum bv. viciae</name>
    <dbReference type="NCBI Taxonomy" id="216596"/>
    <lineage>
        <taxon>Bacteria</taxon>
        <taxon>Pseudomonadati</taxon>
        <taxon>Pseudomonadota</taxon>
        <taxon>Alphaproteobacteria</taxon>
        <taxon>Hyphomicrobiales</taxon>
        <taxon>Rhizobiaceae</taxon>
        <taxon>Rhizobium/Agrobacterium group</taxon>
        <taxon>Rhizobium</taxon>
        <taxon>Rhizobium johnstonii</taxon>
    </lineage>
</organism>
<evidence type="ECO:0000255" key="1">
    <source>
        <dbReference type="HAMAP-Rule" id="MF_00051"/>
    </source>
</evidence>
<protein>
    <recommendedName>
        <fullName evidence="1">Serine hydroxymethyltransferase</fullName>
        <shortName evidence="1">SHMT</shortName>
        <shortName evidence="1">Serine methylase</shortName>
        <ecNumber evidence="1">2.1.2.1</ecNumber>
    </recommendedName>
</protein>
<name>GLYA_RHIJ3</name>
<keyword id="KW-0028">Amino-acid biosynthesis</keyword>
<keyword id="KW-0963">Cytoplasm</keyword>
<keyword id="KW-0554">One-carbon metabolism</keyword>
<keyword id="KW-0663">Pyridoxal phosphate</keyword>
<keyword id="KW-0808">Transferase</keyword>
<feature type="chain" id="PRO_1000006304" description="Serine hydroxymethyltransferase">
    <location>
        <begin position="1"/>
        <end position="432"/>
    </location>
</feature>
<feature type="binding site" evidence="1">
    <location>
        <position position="127"/>
    </location>
    <ligand>
        <name>(6S)-5,6,7,8-tetrahydrofolate</name>
        <dbReference type="ChEBI" id="CHEBI:57453"/>
    </ligand>
</feature>
<feature type="binding site" evidence="1">
    <location>
        <begin position="131"/>
        <end position="133"/>
    </location>
    <ligand>
        <name>(6S)-5,6,7,8-tetrahydrofolate</name>
        <dbReference type="ChEBI" id="CHEBI:57453"/>
    </ligand>
</feature>
<feature type="site" description="Plays an important role in substrate specificity" evidence="1">
    <location>
        <position position="235"/>
    </location>
</feature>
<feature type="modified residue" description="N6-(pyridoxal phosphate)lysine" evidence="1">
    <location>
        <position position="236"/>
    </location>
</feature>